<gene>
    <name evidence="1" type="primary">serS</name>
    <name type="ordered locus">GSU0037</name>
</gene>
<protein>
    <recommendedName>
        <fullName evidence="1">Serine--tRNA ligase</fullName>
        <ecNumber evidence="1">6.1.1.11</ecNumber>
    </recommendedName>
    <alternativeName>
        <fullName evidence="1">Seryl-tRNA synthetase</fullName>
        <shortName evidence="1">SerRS</shortName>
    </alternativeName>
    <alternativeName>
        <fullName evidence="1">Seryl-tRNA(Ser/Sec) synthetase</fullName>
    </alternativeName>
</protein>
<name>SYS_GEOSL</name>
<comment type="function">
    <text evidence="1">Catalyzes the attachment of serine to tRNA(Ser). Is also able to aminoacylate tRNA(Sec) with serine, to form the misacylated tRNA L-seryl-tRNA(Sec), which will be further converted into selenocysteinyl-tRNA(Sec).</text>
</comment>
<comment type="catalytic activity">
    <reaction evidence="1">
        <text>tRNA(Ser) + L-serine + ATP = L-seryl-tRNA(Ser) + AMP + diphosphate + H(+)</text>
        <dbReference type="Rhea" id="RHEA:12292"/>
        <dbReference type="Rhea" id="RHEA-COMP:9669"/>
        <dbReference type="Rhea" id="RHEA-COMP:9703"/>
        <dbReference type="ChEBI" id="CHEBI:15378"/>
        <dbReference type="ChEBI" id="CHEBI:30616"/>
        <dbReference type="ChEBI" id="CHEBI:33019"/>
        <dbReference type="ChEBI" id="CHEBI:33384"/>
        <dbReference type="ChEBI" id="CHEBI:78442"/>
        <dbReference type="ChEBI" id="CHEBI:78533"/>
        <dbReference type="ChEBI" id="CHEBI:456215"/>
        <dbReference type="EC" id="6.1.1.11"/>
    </reaction>
</comment>
<comment type="catalytic activity">
    <reaction evidence="1">
        <text>tRNA(Sec) + L-serine + ATP = L-seryl-tRNA(Sec) + AMP + diphosphate + H(+)</text>
        <dbReference type="Rhea" id="RHEA:42580"/>
        <dbReference type="Rhea" id="RHEA-COMP:9742"/>
        <dbReference type="Rhea" id="RHEA-COMP:10128"/>
        <dbReference type="ChEBI" id="CHEBI:15378"/>
        <dbReference type="ChEBI" id="CHEBI:30616"/>
        <dbReference type="ChEBI" id="CHEBI:33019"/>
        <dbReference type="ChEBI" id="CHEBI:33384"/>
        <dbReference type="ChEBI" id="CHEBI:78442"/>
        <dbReference type="ChEBI" id="CHEBI:78533"/>
        <dbReference type="ChEBI" id="CHEBI:456215"/>
        <dbReference type="EC" id="6.1.1.11"/>
    </reaction>
</comment>
<comment type="pathway">
    <text evidence="1">Aminoacyl-tRNA biosynthesis; selenocysteinyl-tRNA(Sec) biosynthesis; L-seryl-tRNA(Sec) from L-serine and tRNA(Sec): step 1/1.</text>
</comment>
<comment type="subunit">
    <text evidence="1">Homodimer. The tRNA molecule binds across the dimer.</text>
</comment>
<comment type="subcellular location">
    <subcellularLocation>
        <location evidence="1">Cytoplasm</location>
    </subcellularLocation>
</comment>
<comment type="domain">
    <text evidence="1">Consists of two distinct domains, a catalytic core and a N-terminal extension that is involved in tRNA binding.</text>
</comment>
<comment type="similarity">
    <text evidence="1">Belongs to the class-II aminoacyl-tRNA synthetase family. Type-1 seryl-tRNA synthetase subfamily.</text>
</comment>
<dbReference type="EC" id="6.1.1.11" evidence="1"/>
<dbReference type="EMBL" id="AE017180">
    <property type="protein sequence ID" value="AAR33372.1"/>
    <property type="molecule type" value="Genomic_DNA"/>
</dbReference>
<dbReference type="RefSeq" id="NP_951099.1">
    <property type="nucleotide sequence ID" value="NC_002939.5"/>
</dbReference>
<dbReference type="RefSeq" id="WP_010940715.1">
    <property type="nucleotide sequence ID" value="NC_002939.5"/>
</dbReference>
<dbReference type="SMR" id="Q74H55"/>
<dbReference type="FunCoup" id="Q74H55">
    <property type="interactions" value="548"/>
</dbReference>
<dbReference type="STRING" id="243231.GSU0037"/>
<dbReference type="EnsemblBacteria" id="AAR33372">
    <property type="protein sequence ID" value="AAR33372"/>
    <property type="gene ID" value="GSU0037"/>
</dbReference>
<dbReference type="KEGG" id="gsu:GSU0037"/>
<dbReference type="PATRIC" id="fig|243231.5.peg.38"/>
<dbReference type="eggNOG" id="COG0172">
    <property type="taxonomic scope" value="Bacteria"/>
</dbReference>
<dbReference type="HOGENOM" id="CLU_023797_1_1_7"/>
<dbReference type="InParanoid" id="Q74H55"/>
<dbReference type="OrthoDB" id="9804647at2"/>
<dbReference type="UniPathway" id="UPA00906">
    <property type="reaction ID" value="UER00895"/>
</dbReference>
<dbReference type="Proteomes" id="UP000000577">
    <property type="component" value="Chromosome"/>
</dbReference>
<dbReference type="GO" id="GO:0005737">
    <property type="term" value="C:cytoplasm"/>
    <property type="evidence" value="ECO:0007669"/>
    <property type="project" value="UniProtKB-SubCell"/>
</dbReference>
<dbReference type="GO" id="GO:0005524">
    <property type="term" value="F:ATP binding"/>
    <property type="evidence" value="ECO:0007669"/>
    <property type="project" value="UniProtKB-UniRule"/>
</dbReference>
<dbReference type="GO" id="GO:0004828">
    <property type="term" value="F:serine-tRNA ligase activity"/>
    <property type="evidence" value="ECO:0007669"/>
    <property type="project" value="UniProtKB-UniRule"/>
</dbReference>
<dbReference type="GO" id="GO:0016260">
    <property type="term" value="P:selenocysteine biosynthetic process"/>
    <property type="evidence" value="ECO:0007669"/>
    <property type="project" value="UniProtKB-UniRule"/>
</dbReference>
<dbReference type="GO" id="GO:0006434">
    <property type="term" value="P:seryl-tRNA aminoacylation"/>
    <property type="evidence" value="ECO:0007669"/>
    <property type="project" value="UniProtKB-UniRule"/>
</dbReference>
<dbReference type="CDD" id="cd00770">
    <property type="entry name" value="SerRS_core"/>
    <property type="match status" value="1"/>
</dbReference>
<dbReference type="Gene3D" id="3.30.930.10">
    <property type="entry name" value="Bira Bifunctional Protein, Domain 2"/>
    <property type="match status" value="1"/>
</dbReference>
<dbReference type="Gene3D" id="1.10.287.40">
    <property type="entry name" value="Serine-tRNA synthetase, tRNA binding domain"/>
    <property type="match status" value="1"/>
</dbReference>
<dbReference type="HAMAP" id="MF_00176">
    <property type="entry name" value="Ser_tRNA_synth_type1"/>
    <property type="match status" value="1"/>
</dbReference>
<dbReference type="InterPro" id="IPR002314">
    <property type="entry name" value="aa-tRNA-synt_IIb"/>
</dbReference>
<dbReference type="InterPro" id="IPR006195">
    <property type="entry name" value="aa-tRNA-synth_II"/>
</dbReference>
<dbReference type="InterPro" id="IPR045864">
    <property type="entry name" value="aa-tRNA-synth_II/BPL/LPL"/>
</dbReference>
<dbReference type="InterPro" id="IPR002317">
    <property type="entry name" value="Ser-tRNA-ligase_type_1"/>
</dbReference>
<dbReference type="InterPro" id="IPR015866">
    <property type="entry name" value="Ser-tRNA-synth_1_N"/>
</dbReference>
<dbReference type="InterPro" id="IPR042103">
    <property type="entry name" value="SerRS_1_N_sf"/>
</dbReference>
<dbReference type="InterPro" id="IPR033729">
    <property type="entry name" value="SerRS_core"/>
</dbReference>
<dbReference type="InterPro" id="IPR010978">
    <property type="entry name" value="tRNA-bd_arm"/>
</dbReference>
<dbReference type="NCBIfam" id="TIGR00414">
    <property type="entry name" value="serS"/>
    <property type="match status" value="1"/>
</dbReference>
<dbReference type="PANTHER" id="PTHR43697:SF1">
    <property type="entry name" value="SERINE--TRNA LIGASE"/>
    <property type="match status" value="1"/>
</dbReference>
<dbReference type="PANTHER" id="PTHR43697">
    <property type="entry name" value="SERYL-TRNA SYNTHETASE"/>
    <property type="match status" value="1"/>
</dbReference>
<dbReference type="Pfam" id="PF02403">
    <property type="entry name" value="Seryl_tRNA_N"/>
    <property type="match status" value="1"/>
</dbReference>
<dbReference type="Pfam" id="PF00587">
    <property type="entry name" value="tRNA-synt_2b"/>
    <property type="match status" value="1"/>
</dbReference>
<dbReference type="PIRSF" id="PIRSF001529">
    <property type="entry name" value="Ser-tRNA-synth_IIa"/>
    <property type="match status" value="1"/>
</dbReference>
<dbReference type="PRINTS" id="PR00981">
    <property type="entry name" value="TRNASYNTHSER"/>
</dbReference>
<dbReference type="SUPFAM" id="SSF55681">
    <property type="entry name" value="Class II aaRS and biotin synthetases"/>
    <property type="match status" value="1"/>
</dbReference>
<dbReference type="SUPFAM" id="SSF46589">
    <property type="entry name" value="tRNA-binding arm"/>
    <property type="match status" value="1"/>
</dbReference>
<dbReference type="PROSITE" id="PS50862">
    <property type="entry name" value="AA_TRNA_LIGASE_II"/>
    <property type="match status" value="1"/>
</dbReference>
<evidence type="ECO:0000255" key="1">
    <source>
        <dbReference type="HAMAP-Rule" id="MF_00176"/>
    </source>
</evidence>
<proteinExistence type="inferred from homology"/>
<feature type="chain" id="PRO_0000122053" description="Serine--tRNA ligase">
    <location>
        <begin position="1"/>
        <end position="422"/>
    </location>
</feature>
<feature type="binding site" evidence="1">
    <location>
        <begin position="229"/>
        <end position="231"/>
    </location>
    <ligand>
        <name>L-serine</name>
        <dbReference type="ChEBI" id="CHEBI:33384"/>
    </ligand>
</feature>
<feature type="binding site" evidence="1">
    <location>
        <begin position="260"/>
        <end position="262"/>
    </location>
    <ligand>
        <name>ATP</name>
        <dbReference type="ChEBI" id="CHEBI:30616"/>
    </ligand>
</feature>
<feature type="binding site" evidence="1">
    <location>
        <position position="283"/>
    </location>
    <ligand>
        <name>L-serine</name>
        <dbReference type="ChEBI" id="CHEBI:33384"/>
    </ligand>
</feature>
<feature type="binding site" evidence="1">
    <location>
        <begin position="347"/>
        <end position="350"/>
    </location>
    <ligand>
        <name>ATP</name>
        <dbReference type="ChEBI" id="CHEBI:30616"/>
    </ligand>
</feature>
<feature type="binding site" evidence="1">
    <location>
        <position position="383"/>
    </location>
    <ligand>
        <name>L-serine</name>
        <dbReference type="ChEBI" id="CHEBI:33384"/>
    </ligand>
</feature>
<organism>
    <name type="scientific">Geobacter sulfurreducens (strain ATCC 51573 / DSM 12127 / PCA)</name>
    <dbReference type="NCBI Taxonomy" id="243231"/>
    <lineage>
        <taxon>Bacteria</taxon>
        <taxon>Pseudomonadati</taxon>
        <taxon>Thermodesulfobacteriota</taxon>
        <taxon>Desulfuromonadia</taxon>
        <taxon>Geobacterales</taxon>
        <taxon>Geobacteraceae</taxon>
        <taxon>Geobacter</taxon>
    </lineage>
</organism>
<accession>Q74H55</accession>
<keyword id="KW-0030">Aminoacyl-tRNA synthetase</keyword>
<keyword id="KW-0067">ATP-binding</keyword>
<keyword id="KW-0963">Cytoplasm</keyword>
<keyword id="KW-0436">Ligase</keyword>
<keyword id="KW-0547">Nucleotide-binding</keyword>
<keyword id="KW-0648">Protein biosynthesis</keyword>
<keyword id="KW-1185">Reference proteome</keyword>
<reference key="1">
    <citation type="journal article" date="2003" name="Science">
        <title>Genome of Geobacter sulfurreducens: metal reduction in subsurface environments.</title>
        <authorList>
            <person name="Methe B.A."/>
            <person name="Nelson K.E."/>
            <person name="Eisen J.A."/>
            <person name="Paulsen I.T."/>
            <person name="Nelson W.C."/>
            <person name="Heidelberg J.F."/>
            <person name="Wu D."/>
            <person name="Wu M."/>
            <person name="Ward N.L."/>
            <person name="Beanan M.J."/>
            <person name="Dodson R.J."/>
            <person name="Madupu R."/>
            <person name="Brinkac L.M."/>
            <person name="Daugherty S.C."/>
            <person name="DeBoy R.T."/>
            <person name="Durkin A.S."/>
            <person name="Gwinn M.L."/>
            <person name="Kolonay J.F."/>
            <person name="Sullivan S.A."/>
            <person name="Haft D.H."/>
            <person name="Selengut J."/>
            <person name="Davidsen T.M."/>
            <person name="Zafar N."/>
            <person name="White O."/>
            <person name="Tran B."/>
            <person name="Romero C."/>
            <person name="Forberger H.A."/>
            <person name="Weidman J.F."/>
            <person name="Khouri H.M."/>
            <person name="Feldblyum T.V."/>
            <person name="Utterback T.R."/>
            <person name="Van Aken S.E."/>
            <person name="Lovley D.R."/>
            <person name="Fraser C.M."/>
        </authorList>
    </citation>
    <scope>NUCLEOTIDE SEQUENCE [LARGE SCALE GENOMIC DNA]</scope>
    <source>
        <strain>ATCC 51573 / DSM 12127 / PCA</strain>
    </source>
</reference>
<sequence>MLDAKYLRENLEEVEARLATRGSEVSLGRFRELDERRRALLTESESLKALKNSVSEAISKVKDKSQIQDKIAEMREVGVRIKGLDDELRGIEDELQMVLLTVPNVPHPTVPVGASEADNRQVRTWGEPPCFAFDPKPHWEIGEGLGILDFERGAKLTGARFTLYRGAGARLERALVNFMLDLHTERHNYLEMLPPFVVNRESMTGTGQLPKFEDDLFHLEGVDYFLIPTAEVPVTNIHRAEILKAADLPLSYTAYTPCFRKEAGSYGKDVRGLIRQHQFNKVELVKFVHPATSYDELEKLLSNAEEVLRQLGLAYRVVELCTGDMGFSAAKTYDIEVWLPGQETYREISSCSNFEDFQSRRASIRFREDEKSKPEFVHTLNGSGLAVGRTLVAILENYQQEDGSVVIPDVLRPYMGGLQKIG</sequence>